<reference key="1">
    <citation type="journal article" date="2007" name="Proc. Natl. Acad. Sci. U.S.A.">
        <title>Genome plasticity of BCG and impact on vaccine efficacy.</title>
        <authorList>
            <person name="Brosch R."/>
            <person name="Gordon S.V."/>
            <person name="Garnier T."/>
            <person name="Eiglmeier K."/>
            <person name="Frigui W."/>
            <person name="Valenti P."/>
            <person name="Dos Santos S."/>
            <person name="Duthoy S."/>
            <person name="Lacroix C."/>
            <person name="Garcia-Pelayo C."/>
            <person name="Inwald J.K."/>
            <person name="Golby P."/>
            <person name="Garcia J.N."/>
            <person name="Hewinson R.G."/>
            <person name="Behr M.A."/>
            <person name="Quail M.A."/>
            <person name="Churcher C."/>
            <person name="Barrell B.G."/>
            <person name="Parkhill J."/>
            <person name="Cole S.T."/>
        </authorList>
    </citation>
    <scope>NUCLEOTIDE SEQUENCE [LARGE SCALE GENOMIC DNA]</scope>
    <source>
        <strain>BCG / Pasteur 1173P2</strain>
    </source>
</reference>
<accession>A1KNZ5</accession>
<dbReference type="EC" id="2.4.2.9" evidence="1"/>
<dbReference type="EMBL" id="AM408590">
    <property type="protein sequence ID" value="CAL73363.1"/>
    <property type="molecule type" value="Genomic_DNA"/>
</dbReference>
<dbReference type="RefSeq" id="WP_003417245.1">
    <property type="nucleotide sequence ID" value="NC_008769.1"/>
</dbReference>
<dbReference type="SMR" id="A1KNZ5"/>
<dbReference type="GeneID" id="45427304"/>
<dbReference type="KEGG" id="mbb:BCG_3374c"/>
<dbReference type="HOGENOM" id="CLU_067096_2_3_11"/>
<dbReference type="UniPathway" id="UPA00574">
    <property type="reaction ID" value="UER00636"/>
</dbReference>
<dbReference type="Proteomes" id="UP000001472">
    <property type="component" value="Chromosome"/>
</dbReference>
<dbReference type="GO" id="GO:0005525">
    <property type="term" value="F:GTP binding"/>
    <property type="evidence" value="ECO:0007669"/>
    <property type="project" value="UniProtKB-KW"/>
</dbReference>
<dbReference type="GO" id="GO:0000287">
    <property type="term" value="F:magnesium ion binding"/>
    <property type="evidence" value="ECO:0007669"/>
    <property type="project" value="UniProtKB-UniRule"/>
</dbReference>
<dbReference type="GO" id="GO:0004845">
    <property type="term" value="F:uracil phosphoribosyltransferase activity"/>
    <property type="evidence" value="ECO:0007669"/>
    <property type="project" value="UniProtKB-UniRule"/>
</dbReference>
<dbReference type="GO" id="GO:0044206">
    <property type="term" value="P:UMP salvage"/>
    <property type="evidence" value="ECO:0007669"/>
    <property type="project" value="UniProtKB-UniRule"/>
</dbReference>
<dbReference type="GO" id="GO:0006223">
    <property type="term" value="P:uracil salvage"/>
    <property type="evidence" value="ECO:0007669"/>
    <property type="project" value="InterPro"/>
</dbReference>
<dbReference type="CDD" id="cd06223">
    <property type="entry name" value="PRTases_typeI"/>
    <property type="match status" value="1"/>
</dbReference>
<dbReference type="FunFam" id="3.40.50.2020:FF:000003">
    <property type="entry name" value="Uracil phosphoribosyltransferase"/>
    <property type="match status" value="1"/>
</dbReference>
<dbReference type="Gene3D" id="3.40.50.2020">
    <property type="match status" value="1"/>
</dbReference>
<dbReference type="HAMAP" id="MF_01218_B">
    <property type="entry name" value="Upp_B"/>
    <property type="match status" value="1"/>
</dbReference>
<dbReference type="InterPro" id="IPR000836">
    <property type="entry name" value="PRibTrfase_dom"/>
</dbReference>
<dbReference type="InterPro" id="IPR029057">
    <property type="entry name" value="PRTase-like"/>
</dbReference>
<dbReference type="InterPro" id="IPR034332">
    <property type="entry name" value="Upp_B"/>
</dbReference>
<dbReference type="InterPro" id="IPR050054">
    <property type="entry name" value="UPRTase/APRTase"/>
</dbReference>
<dbReference type="InterPro" id="IPR005765">
    <property type="entry name" value="Ura_phspho_trans"/>
</dbReference>
<dbReference type="NCBIfam" id="NF001097">
    <property type="entry name" value="PRK00129.1"/>
    <property type="match status" value="1"/>
</dbReference>
<dbReference type="NCBIfam" id="TIGR01091">
    <property type="entry name" value="upp"/>
    <property type="match status" value="1"/>
</dbReference>
<dbReference type="PANTHER" id="PTHR32315">
    <property type="entry name" value="ADENINE PHOSPHORIBOSYLTRANSFERASE"/>
    <property type="match status" value="1"/>
</dbReference>
<dbReference type="PANTHER" id="PTHR32315:SF4">
    <property type="entry name" value="URACIL PHOSPHORIBOSYLTRANSFERASE, CHLOROPLASTIC"/>
    <property type="match status" value="1"/>
</dbReference>
<dbReference type="Pfam" id="PF14681">
    <property type="entry name" value="UPRTase"/>
    <property type="match status" value="1"/>
</dbReference>
<dbReference type="SUPFAM" id="SSF53271">
    <property type="entry name" value="PRTase-like"/>
    <property type="match status" value="1"/>
</dbReference>
<sequence length="207" mass="21898">MQVHVVDHPLAAARLTTLRDERTDNAGFRAALRELTLLLIYEATRDAPCEPVPIRTPLAETVGSRLTKPPLLVPVLRAGLGMVDEAHAALPEAHVGFVGVARDEQTHQPVPYLDSLPDDLTDVPVMVLDPMVATGGSMTHTLGLLISRGAADITVLCVVAAPEGIAALQKAAPNVRLFTAAIDEGLNEVAYIVPGLGDAGDRQFGPR</sequence>
<evidence type="ECO:0000255" key="1">
    <source>
        <dbReference type="HAMAP-Rule" id="MF_01218"/>
    </source>
</evidence>
<keyword id="KW-0021">Allosteric enzyme</keyword>
<keyword id="KW-0328">Glycosyltransferase</keyword>
<keyword id="KW-0342">GTP-binding</keyword>
<keyword id="KW-0460">Magnesium</keyword>
<keyword id="KW-0547">Nucleotide-binding</keyword>
<keyword id="KW-0808">Transferase</keyword>
<comment type="function">
    <text evidence="1">Catalyzes the conversion of uracil and 5-phospho-alpha-D-ribose 1-diphosphate (PRPP) to UMP and diphosphate.</text>
</comment>
<comment type="catalytic activity">
    <reaction evidence="1">
        <text>UMP + diphosphate = 5-phospho-alpha-D-ribose 1-diphosphate + uracil</text>
        <dbReference type="Rhea" id="RHEA:13017"/>
        <dbReference type="ChEBI" id="CHEBI:17568"/>
        <dbReference type="ChEBI" id="CHEBI:33019"/>
        <dbReference type="ChEBI" id="CHEBI:57865"/>
        <dbReference type="ChEBI" id="CHEBI:58017"/>
        <dbReference type="EC" id="2.4.2.9"/>
    </reaction>
</comment>
<comment type="cofactor">
    <cofactor evidence="1">
        <name>Mg(2+)</name>
        <dbReference type="ChEBI" id="CHEBI:18420"/>
    </cofactor>
    <text evidence="1">Binds 1 Mg(2+) ion per subunit. The magnesium is bound as Mg-PRPP.</text>
</comment>
<comment type="activity regulation">
    <text evidence="1">Allosterically activated by GTP.</text>
</comment>
<comment type="pathway">
    <text evidence="1">Pyrimidine metabolism; UMP biosynthesis via salvage pathway; UMP from uracil: step 1/1.</text>
</comment>
<comment type="similarity">
    <text evidence="1">Belongs to the UPRTase family.</text>
</comment>
<gene>
    <name evidence="1" type="primary">upp</name>
    <name type="ordered locus">BCG_3374c</name>
</gene>
<protein>
    <recommendedName>
        <fullName evidence="1">Uracil phosphoribosyltransferase</fullName>
        <ecNumber evidence="1">2.4.2.9</ecNumber>
    </recommendedName>
    <alternativeName>
        <fullName evidence="1">UMP pyrophosphorylase</fullName>
    </alternativeName>
    <alternativeName>
        <fullName evidence="1">UPRTase</fullName>
    </alternativeName>
</protein>
<feature type="chain" id="PRO_1000053743" description="Uracil phosphoribosyltransferase">
    <location>
        <begin position="1"/>
        <end position="207"/>
    </location>
</feature>
<feature type="binding site" evidence="1">
    <location>
        <position position="77"/>
    </location>
    <ligand>
        <name>5-phospho-alpha-D-ribose 1-diphosphate</name>
        <dbReference type="ChEBI" id="CHEBI:58017"/>
    </ligand>
</feature>
<feature type="binding site" evidence="1">
    <location>
        <position position="102"/>
    </location>
    <ligand>
        <name>5-phospho-alpha-D-ribose 1-diphosphate</name>
        <dbReference type="ChEBI" id="CHEBI:58017"/>
    </ligand>
</feature>
<feature type="binding site" evidence="1">
    <location>
        <begin position="129"/>
        <end position="137"/>
    </location>
    <ligand>
        <name>5-phospho-alpha-D-ribose 1-diphosphate</name>
        <dbReference type="ChEBI" id="CHEBI:58017"/>
    </ligand>
</feature>
<feature type="binding site" evidence="1">
    <location>
        <position position="192"/>
    </location>
    <ligand>
        <name>uracil</name>
        <dbReference type="ChEBI" id="CHEBI:17568"/>
    </ligand>
</feature>
<feature type="binding site" evidence="1">
    <location>
        <begin position="197"/>
        <end position="199"/>
    </location>
    <ligand>
        <name>uracil</name>
        <dbReference type="ChEBI" id="CHEBI:17568"/>
    </ligand>
</feature>
<feature type="binding site" evidence="1">
    <location>
        <position position="198"/>
    </location>
    <ligand>
        <name>5-phospho-alpha-D-ribose 1-diphosphate</name>
        <dbReference type="ChEBI" id="CHEBI:58017"/>
    </ligand>
</feature>
<proteinExistence type="inferred from homology"/>
<organism>
    <name type="scientific">Mycobacterium bovis (strain BCG / Pasteur 1173P2)</name>
    <dbReference type="NCBI Taxonomy" id="410289"/>
    <lineage>
        <taxon>Bacteria</taxon>
        <taxon>Bacillati</taxon>
        <taxon>Actinomycetota</taxon>
        <taxon>Actinomycetes</taxon>
        <taxon>Mycobacteriales</taxon>
        <taxon>Mycobacteriaceae</taxon>
        <taxon>Mycobacterium</taxon>
        <taxon>Mycobacterium tuberculosis complex</taxon>
    </lineage>
</organism>
<name>UPP_MYCBP</name>